<accession>Q9ZUP4</accession>
<reference key="1">
    <citation type="journal article" date="2005" name="Plant Cell">
        <title>Plasmodesmal-associated protein kinase in tobacco and Arabidopsis recognizes a subset of non-cell-autonomous proteins.</title>
        <authorList>
            <person name="Lee J.-Y."/>
            <person name="Taoka K."/>
            <person name="Yoo B.-C."/>
            <person name="Ben-Nissan G."/>
            <person name="Kim D.-J."/>
            <person name="Lucas W.J."/>
        </authorList>
    </citation>
    <scope>NUCLEOTIDE SEQUENCE [MRNA]</scope>
    <scope>SUBCELLULAR LOCATION</scope>
</reference>
<reference key="2">
    <citation type="journal article" date="1999" name="Nature">
        <title>Sequence and analysis of chromosome 2 of the plant Arabidopsis thaliana.</title>
        <authorList>
            <person name="Lin X."/>
            <person name="Kaul S."/>
            <person name="Rounsley S.D."/>
            <person name="Shea T.P."/>
            <person name="Benito M.-I."/>
            <person name="Town C.D."/>
            <person name="Fujii C.Y."/>
            <person name="Mason T.M."/>
            <person name="Bowman C.L."/>
            <person name="Barnstead M.E."/>
            <person name="Feldblyum T.V."/>
            <person name="Buell C.R."/>
            <person name="Ketchum K.A."/>
            <person name="Lee J.J."/>
            <person name="Ronning C.M."/>
            <person name="Koo H.L."/>
            <person name="Moffat K.S."/>
            <person name="Cronin L.A."/>
            <person name="Shen M."/>
            <person name="Pai G."/>
            <person name="Van Aken S."/>
            <person name="Umayam L."/>
            <person name="Tallon L.J."/>
            <person name="Gill J.E."/>
            <person name="Adams M.D."/>
            <person name="Carrera A.J."/>
            <person name="Creasy T.H."/>
            <person name="Goodman H.M."/>
            <person name="Somerville C.R."/>
            <person name="Copenhaver G.P."/>
            <person name="Preuss D."/>
            <person name="Nierman W.C."/>
            <person name="White O."/>
            <person name="Eisen J.A."/>
            <person name="Salzberg S.L."/>
            <person name="Fraser C.M."/>
            <person name="Venter J.C."/>
        </authorList>
    </citation>
    <scope>NUCLEOTIDE SEQUENCE [LARGE SCALE GENOMIC DNA]</scope>
    <source>
        <strain>cv. Columbia</strain>
    </source>
</reference>
<reference key="3">
    <citation type="journal article" date="2017" name="Plant J.">
        <title>Araport11: a complete reannotation of the Arabidopsis thaliana reference genome.</title>
        <authorList>
            <person name="Cheng C.Y."/>
            <person name="Krishnakumar V."/>
            <person name="Chan A.P."/>
            <person name="Thibaud-Nissen F."/>
            <person name="Schobel S."/>
            <person name="Town C.D."/>
        </authorList>
    </citation>
    <scope>GENOME REANNOTATION</scope>
    <source>
        <strain>cv. Columbia</strain>
    </source>
</reference>
<reference key="4">
    <citation type="journal article" date="2003" name="Science">
        <title>Empirical analysis of transcriptional activity in the Arabidopsis genome.</title>
        <authorList>
            <person name="Yamada K."/>
            <person name="Lim J."/>
            <person name="Dale J.M."/>
            <person name="Chen H."/>
            <person name="Shinn P."/>
            <person name="Palm C.J."/>
            <person name="Southwick A.M."/>
            <person name="Wu H.C."/>
            <person name="Kim C.J."/>
            <person name="Nguyen M."/>
            <person name="Pham P.K."/>
            <person name="Cheuk R.F."/>
            <person name="Karlin-Newmann G."/>
            <person name="Liu S.X."/>
            <person name="Lam B."/>
            <person name="Sakano H."/>
            <person name="Wu T."/>
            <person name="Yu G."/>
            <person name="Miranda M."/>
            <person name="Quach H.L."/>
            <person name="Tripp M."/>
            <person name="Chang C.H."/>
            <person name="Lee J.M."/>
            <person name="Toriumi M.J."/>
            <person name="Chan M.M."/>
            <person name="Tang C.C."/>
            <person name="Onodera C.S."/>
            <person name="Deng J.M."/>
            <person name="Akiyama K."/>
            <person name="Ansari Y."/>
            <person name="Arakawa T."/>
            <person name="Banh J."/>
            <person name="Banno F."/>
            <person name="Bowser L."/>
            <person name="Brooks S.Y."/>
            <person name="Carninci P."/>
            <person name="Chao Q."/>
            <person name="Choy N."/>
            <person name="Enju A."/>
            <person name="Goldsmith A.D."/>
            <person name="Gurjal M."/>
            <person name="Hansen N.F."/>
            <person name="Hayashizaki Y."/>
            <person name="Johnson-Hopson C."/>
            <person name="Hsuan V.W."/>
            <person name="Iida K."/>
            <person name="Karnes M."/>
            <person name="Khan S."/>
            <person name="Koesema E."/>
            <person name="Ishida J."/>
            <person name="Jiang P.X."/>
            <person name="Jones T."/>
            <person name="Kawai J."/>
            <person name="Kamiya A."/>
            <person name="Meyers C."/>
            <person name="Nakajima M."/>
            <person name="Narusaka M."/>
            <person name="Seki M."/>
            <person name="Sakurai T."/>
            <person name="Satou M."/>
            <person name="Tamse R."/>
            <person name="Vaysberg M."/>
            <person name="Wallender E.K."/>
            <person name="Wong C."/>
            <person name="Yamamura Y."/>
            <person name="Yuan S."/>
            <person name="Shinozaki K."/>
            <person name="Davis R.W."/>
            <person name="Theologis A."/>
            <person name="Ecker J.R."/>
        </authorList>
    </citation>
    <scope>NUCLEOTIDE SEQUENCE [LARGE SCALE MRNA]</scope>
    <source>
        <strain>cv. Columbia</strain>
    </source>
</reference>
<reference key="5">
    <citation type="submission" date="2002-03" db="EMBL/GenBank/DDBJ databases">
        <title>Full-length cDNA from Arabidopsis thaliana.</title>
        <authorList>
            <person name="Brover V.V."/>
            <person name="Troukhan M.E."/>
            <person name="Alexandrov N.A."/>
            <person name="Lu Y.-P."/>
            <person name="Flavell R.B."/>
            <person name="Feldmann K.A."/>
        </authorList>
    </citation>
    <scope>NUCLEOTIDE SEQUENCE [LARGE SCALE MRNA]</scope>
</reference>
<reference key="6">
    <citation type="journal article" date="2009" name="Plant Physiol.">
        <title>Large-scale Arabidopsis phosphoproteome profiling reveals novel chloroplast kinase substrates and phosphorylation networks.</title>
        <authorList>
            <person name="Reiland S."/>
            <person name="Messerli G."/>
            <person name="Baerenfaller K."/>
            <person name="Gerrits B."/>
            <person name="Endler A."/>
            <person name="Grossmann J."/>
            <person name="Gruissem W."/>
            <person name="Baginsky S."/>
        </authorList>
    </citation>
    <scope>PHOSPHORYLATION [LARGE SCALE ANALYSIS] AT SER-390</scope>
    <scope>IDENTIFICATION BY MASS SPECTROMETRY [LARGE SCALE ANALYSIS]</scope>
</reference>
<comment type="function">
    <text evidence="1">Casein kinases are operationally defined by their preferential utilization of acidic proteins such as caseins as substrates. It can phosphorylate a large number of proteins.</text>
</comment>
<comment type="catalytic activity">
    <reaction evidence="6">
        <text>L-seryl-[protein] + ATP = O-phospho-L-seryl-[protein] + ADP + H(+)</text>
        <dbReference type="Rhea" id="RHEA:17989"/>
        <dbReference type="Rhea" id="RHEA-COMP:9863"/>
        <dbReference type="Rhea" id="RHEA-COMP:11604"/>
        <dbReference type="ChEBI" id="CHEBI:15378"/>
        <dbReference type="ChEBI" id="CHEBI:29999"/>
        <dbReference type="ChEBI" id="CHEBI:30616"/>
        <dbReference type="ChEBI" id="CHEBI:83421"/>
        <dbReference type="ChEBI" id="CHEBI:456216"/>
        <dbReference type="EC" id="2.7.11.1"/>
    </reaction>
</comment>
<comment type="catalytic activity">
    <reaction evidence="6">
        <text>L-threonyl-[protein] + ATP = O-phospho-L-threonyl-[protein] + ADP + H(+)</text>
        <dbReference type="Rhea" id="RHEA:46608"/>
        <dbReference type="Rhea" id="RHEA-COMP:11060"/>
        <dbReference type="Rhea" id="RHEA-COMP:11605"/>
        <dbReference type="ChEBI" id="CHEBI:15378"/>
        <dbReference type="ChEBI" id="CHEBI:30013"/>
        <dbReference type="ChEBI" id="CHEBI:30616"/>
        <dbReference type="ChEBI" id="CHEBI:61977"/>
        <dbReference type="ChEBI" id="CHEBI:456216"/>
        <dbReference type="EC" id="2.7.11.1"/>
    </reaction>
</comment>
<comment type="subunit">
    <text evidence="1">Monomer.</text>
</comment>
<comment type="subcellular location">
    <subcellularLocation>
        <location evidence="4">Cytoplasm</location>
    </subcellularLocation>
</comment>
<comment type="PTM">
    <text evidence="1">Autophosphorylated.</text>
</comment>
<comment type="similarity">
    <text evidence="6">Belongs to the protein kinase superfamily. CK1 Ser/Thr protein kinase family. Casein kinase I subfamily.</text>
</comment>
<keyword id="KW-0067">ATP-binding</keyword>
<keyword id="KW-0963">Cytoplasm</keyword>
<keyword id="KW-0418">Kinase</keyword>
<keyword id="KW-0547">Nucleotide-binding</keyword>
<keyword id="KW-0597">Phosphoprotein</keyword>
<keyword id="KW-1185">Reference proteome</keyword>
<keyword id="KW-0723">Serine/threonine-protein kinase</keyword>
<keyword id="KW-0808">Transferase</keyword>
<sequence>MEPRVGNKFRLGRKIGSGSFGEIYLGTDVQTNEEVAIKLESVKTAHPQLSYESRIYRVLQGGTGIPNMKWYGVEGDYNVLVMDLLGPSLEDLFSYCKRQFSLKTVLMLADQMINRLEFIHSKSYLHRDIKPDNFLMGLGRRANQVYIIDYGLAKKYRDSSTHRHIPYRENKSLIGTPRYASLNTHLGIEQSRRDDIESLGYILMYFLKGSLPWQGLKAGNKKQKYDKISEKKVSTSIETLCRGHPTEFASYFHYCRSLRFDDKPDYAYLKRLFRNLFIREGFQFDFVFDWTVYKYQQSQSGNPQPRPHDGGVGTSSGLNPAVGNSEKRPDVPNQRTNPDFTLKQKDKNGNDSAIAKDKLLPGSLNLGRSEGSSSRRVVDTSSREPFSGGSDNANYETALKGIDGLRINNNAGDETAATPQSNGDDVEPQSKAL</sequence>
<gene>
    <name evidence="5" type="primary">CKL5</name>
    <name evidence="7" type="ordered locus">At2g19470</name>
</gene>
<protein>
    <recommendedName>
        <fullName evidence="6">Casein kinase 1-like protein 5</fullName>
        <ecNumber evidence="6">2.7.11.1</ecNumber>
    </recommendedName>
    <alternativeName>
        <fullName evidence="5">Protein CASEIN KINASE I-LIKE 5</fullName>
    </alternativeName>
</protein>
<dbReference type="EC" id="2.7.11.1" evidence="6"/>
<dbReference type="EMBL" id="AY943844">
    <property type="protein sequence ID" value="AAY24534.1"/>
    <property type="molecule type" value="mRNA"/>
</dbReference>
<dbReference type="EMBL" id="AC005917">
    <property type="protein sequence ID" value="AAD10146.1"/>
    <property type="molecule type" value="Genomic_DNA"/>
</dbReference>
<dbReference type="EMBL" id="CP002685">
    <property type="protein sequence ID" value="AEC06884.1"/>
    <property type="molecule type" value="Genomic_DNA"/>
</dbReference>
<dbReference type="EMBL" id="AY099837">
    <property type="protein sequence ID" value="AAM20688.1"/>
    <property type="molecule type" value="mRNA"/>
</dbReference>
<dbReference type="EMBL" id="BT006580">
    <property type="protein sequence ID" value="AAP31924.1"/>
    <property type="molecule type" value="mRNA"/>
</dbReference>
<dbReference type="EMBL" id="AY086262">
    <property type="protein sequence ID" value="AAM64335.1"/>
    <property type="molecule type" value="mRNA"/>
</dbReference>
<dbReference type="PIR" id="B84577">
    <property type="entry name" value="B84577"/>
</dbReference>
<dbReference type="RefSeq" id="NP_179537.1">
    <property type="nucleotide sequence ID" value="NM_127505.5"/>
</dbReference>
<dbReference type="SMR" id="Q9ZUP4"/>
<dbReference type="FunCoup" id="Q9ZUP4">
    <property type="interactions" value="4308"/>
</dbReference>
<dbReference type="STRING" id="3702.Q9ZUP4"/>
<dbReference type="iPTMnet" id="Q9ZUP4"/>
<dbReference type="PaxDb" id="3702-AT2G19470.1"/>
<dbReference type="ProteomicsDB" id="246706"/>
<dbReference type="EnsemblPlants" id="AT2G19470.1">
    <property type="protein sequence ID" value="AT2G19470.1"/>
    <property type="gene ID" value="AT2G19470"/>
</dbReference>
<dbReference type="GeneID" id="816466"/>
<dbReference type="Gramene" id="AT2G19470.1">
    <property type="protein sequence ID" value="AT2G19470.1"/>
    <property type="gene ID" value="AT2G19470"/>
</dbReference>
<dbReference type="KEGG" id="ath:AT2G19470"/>
<dbReference type="Araport" id="AT2G19470"/>
<dbReference type="TAIR" id="AT2G19470">
    <property type="gene designation" value="CKL5"/>
</dbReference>
<dbReference type="eggNOG" id="KOG1164">
    <property type="taxonomic scope" value="Eukaryota"/>
</dbReference>
<dbReference type="HOGENOM" id="CLU_019279_0_0_1"/>
<dbReference type="InParanoid" id="Q9ZUP4"/>
<dbReference type="OMA" id="IYLNYCK"/>
<dbReference type="OrthoDB" id="5800476at2759"/>
<dbReference type="PhylomeDB" id="Q9ZUP4"/>
<dbReference type="PRO" id="PR:Q9ZUP4"/>
<dbReference type="Proteomes" id="UP000006548">
    <property type="component" value="Chromosome 2"/>
</dbReference>
<dbReference type="ExpressionAtlas" id="Q9ZUP4">
    <property type="expression patterns" value="baseline and differential"/>
</dbReference>
<dbReference type="GO" id="GO:0005737">
    <property type="term" value="C:cytoplasm"/>
    <property type="evidence" value="ECO:0000314"/>
    <property type="project" value="TAIR"/>
</dbReference>
<dbReference type="GO" id="GO:0005524">
    <property type="term" value="F:ATP binding"/>
    <property type="evidence" value="ECO:0007669"/>
    <property type="project" value="UniProtKB-KW"/>
</dbReference>
<dbReference type="GO" id="GO:0106310">
    <property type="term" value="F:protein serine kinase activity"/>
    <property type="evidence" value="ECO:0007669"/>
    <property type="project" value="RHEA"/>
</dbReference>
<dbReference type="GO" id="GO:0004674">
    <property type="term" value="F:protein serine/threonine kinase activity"/>
    <property type="evidence" value="ECO:0007669"/>
    <property type="project" value="UniProtKB-KW"/>
</dbReference>
<dbReference type="CDD" id="cd14125">
    <property type="entry name" value="STKc_CK1_delta_epsilon"/>
    <property type="match status" value="1"/>
</dbReference>
<dbReference type="FunFam" id="1.10.510.10:FF:000134">
    <property type="entry name" value="Casein kinase I isoform delta-like"/>
    <property type="match status" value="1"/>
</dbReference>
<dbReference type="FunFam" id="3.30.200.20:FF:000538">
    <property type="entry name" value="Putative Casein kinase I"/>
    <property type="match status" value="1"/>
</dbReference>
<dbReference type="Gene3D" id="1.10.510.10">
    <property type="entry name" value="Transferase(Phosphotransferase) domain 1"/>
    <property type="match status" value="1"/>
</dbReference>
<dbReference type="InterPro" id="IPR050235">
    <property type="entry name" value="CK1_Ser-Thr_kinase"/>
</dbReference>
<dbReference type="InterPro" id="IPR011009">
    <property type="entry name" value="Kinase-like_dom_sf"/>
</dbReference>
<dbReference type="InterPro" id="IPR000719">
    <property type="entry name" value="Prot_kinase_dom"/>
</dbReference>
<dbReference type="InterPro" id="IPR017441">
    <property type="entry name" value="Protein_kinase_ATP_BS"/>
</dbReference>
<dbReference type="InterPro" id="IPR008271">
    <property type="entry name" value="Ser/Thr_kinase_AS"/>
</dbReference>
<dbReference type="PANTHER" id="PTHR11909">
    <property type="entry name" value="CASEIN KINASE-RELATED"/>
    <property type="match status" value="1"/>
</dbReference>
<dbReference type="Pfam" id="PF00069">
    <property type="entry name" value="Pkinase"/>
    <property type="match status" value="1"/>
</dbReference>
<dbReference type="SMART" id="SM00220">
    <property type="entry name" value="S_TKc"/>
    <property type="match status" value="1"/>
</dbReference>
<dbReference type="SUPFAM" id="SSF56112">
    <property type="entry name" value="Protein kinase-like (PK-like)"/>
    <property type="match status" value="1"/>
</dbReference>
<dbReference type="PROSITE" id="PS00107">
    <property type="entry name" value="PROTEIN_KINASE_ATP"/>
    <property type="match status" value="1"/>
</dbReference>
<dbReference type="PROSITE" id="PS50011">
    <property type="entry name" value="PROTEIN_KINASE_DOM"/>
    <property type="match status" value="1"/>
</dbReference>
<dbReference type="PROSITE" id="PS00108">
    <property type="entry name" value="PROTEIN_KINASE_ST"/>
    <property type="match status" value="1"/>
</dbReference>
<name>CKL5_ARATH</name>
<evidence type="ECO:0000250" key="1">
    <source>
        <dbReference type="UniProtKB" id="P48730"/>
    </source>
</evidence>
<evidence type="ECO:0000255" key="2">
    <source>
        <dbReference type="PROSITE-ProRule" id="PRU00159"/>
    </source>
</evidence>
<evidence type="ECO:0000256" key="3">
    <source>
        <dbReference type="SAM" id="MobiDB-lite"/>
    </source>
</evidence>
<evidence type="ECO:0000269" key="4">
    <source>
    </source>
</evidence>
<evidence type="ECO:0000303" key="5">
    <source>
    </source>
</evidence>
<evidence type="ECO:0000305" key="6"/>
<evidence type="ECO:0000312" key="7">
    <source>
        <dbReference type="Araport" id="AT2G19470"/>
    </source>
</evidence>
<evidence type="ECO:0007744" key="8">
    <source>
    </source>
</evidence>
<proteinExistence type="evidence at protein level"/>
<organism>
    <name type="scientific">Arabidopsis thaliana</name>
    <name type="common">Mouse-ear cress</name>
    <dbReference type="NCBI Taxonomy" id="3702"/>
    <lineage>
        <taxon>Eukaryota</taxon>
        <taxon>Viridiplantae</taxon>
        <taxon>Streptophyta</taxon>
        <taxon>Embryophyta</taxon>
        <taxon>Tracheophyta</taxon>
        <taxon>Spermatophyta</taxon>
        <taxon>Magnoliopsida</taxon>
        <taxon>eudicotyledons</taxon>
        <taxon>Gunneridae</taxon>
        <taxon>Pentapetalae</taxon>
        <taxon>rosids</taxon>
        <taxon>malvids</taxon>
        <taxon>Brassicales</taxon>
        <taxon>Brassicaceae</taxon>
        <taxon>Camelineae</taxon>
        <taxon>Arabidopsis</taxon>
    </lineage>
</organism>
<feature type="chain" id="PRO_0000437145" description="Casein kinase 1-like protein 5">
    <location>
        <begin position="1"/>
        <end position="433"/>
    </location>
</feature>
<feature type="domain" description="Protein kinase" evidence="2">
    <location>
        <begin position="9"/>
        <end position="278"/>
    </location>
</feature>
<feature type="region of interest" description="Disordered" evidence="3">
    <location>
        <begin position="297"/>
        <end position="433"/>
    </location>
</feature>
<feature type="compositionally biased region" description="Basic and acidic residues" evidence="3">
    <location>
        <begin position="342"/>
        <end position="359"/>
    </location>
</feature>
<feature type="compositionally biased region" description="Low complexity" evidence="3">
    <location>
        <begin position="362"/>
        <end position="375"/>
    </location>
</feature>
<feature type="compositionally biased region" description="Polar residues" evidence="3">
    <location>
        <begin position="407"/>
        <end position="423"/>
    </location>
</feature>
<feature type="active site" description="Proton acceptor" evidence="2">
    <location>
        <position position="128"/>
    </location>
</feature>
<feature type="binding site" evidence="2">
    <location>
        <begin position="15"/>
        <end position="23"/>
    </location>
    <ligand>
        <name>ATP</name>
        <dbReference type="ChEBI" id="CHEBI:30616"/>
    </ligand>
</feature>
<feature type="binding site" evidence="2">
    <location>
        <position position="38"/>
    </location>
    <ligand>
        <name>ATP</name>
        <dbReference type="ChEBI" id="CHEBI:30616"/>
    </ligand>
</feature>
<feature type="modified residue" description="Phosphoserine" evidence="8">
    <location>
        <position position="390"/>
    </location>
</feature>